<organism>
    <name type="scientific">Bacillus cereus (strain ATCC 14579 / DSM 31 / CCUG 7414 / JCM 2152 / NBRC 15305 / NCIMB 9373 / NCTC 2599 / NRRL B-3711)</name>
    <dbReference type="NCBI Taxonomy" id="226900"/>
    <lineage>
        <taxon>Bacteria</taxon>
        <taxon>Bacillati</taxon>
        <taxon>Bacillota</taxon>
        <taxon>Bacilli</taxon>
        <taxon>Bacillales</taxon>
        <taxon>Bacillaceae</taxon>
        <taxon>Bacillus</taxon>
        <taxon>Bacillus cereus group</taxon>
    </lineage>
</organism>
<keyword id="KW-1185">Reference proteome</keyword>
<keyword id="KW-0687">Ribonucleoprotein</keyword>
<keyword id="KW-0689">Ribosomal protein</keyword>
<keyword id="KW-0694">RNA-binding</keyword>
<keyword id="KW-0699">rRNA-binding</keyword>
<comment type="function">
    <text evidence="2">One of the primary rRNA binding proteins, it binds directly to 16S rRNA central domain where it helps coordinate assembly of the platform of the 30S subunit.</text>
</comment>
<comment type="subunit">
    <text evidence="2">Part of the 30S ribosomal subunit. Contacts proteins S5 and S12.</text>
</comment>
<comment type="similarity">
    <text evidence="2">Belongs to the universal ribosomal protein uS8 family.</text>
</comment>
<sequence>MVMTDPIADMLTRIRNANMVRHEKLEVPASKIKKEIAELLKREGFIRDVEYIEDNKQGILRIFLKYGANNERVITGLKRISKPGLRVYAKADEVPRVLNGLGIALVSTSKGVMTDKDARQLQTGGEVVAYVW</sequence>
<reference key="1">
    <citation type="journal article" date="2003" name="Nature">
        <title>Genome sequence of Bacillus cereus and comparative analysis with Bacillus anthracis.</title>
        <authorList>
            <person name="Ivanova N."/>
            <person name="Sorokin A."/>
            <person name="Anderson I."/>
            <person name="Galleron N."/>
            <person name="Candelon B."/>
            <person name="Kapatral V."/>
            <person name="Bhattacharyya A."/>
            <person name="Reznik G."/>
            <person name="Mikhailova N."/>
            <person name="Lapidus A."/>
            <person name="Chu L."/>
            <person name="Mazur M."/>
            <person name="Goltsman E."/>
            <person name="Larsen N."/>
            <person name="D'Souza M."/>
            <person name="Walunas T."/>
            <person name="Grechkin Y."/>
            <person name="Pusch G."/>
            <person name="Haselkorn R."/>
            <person name="Fonstein M."/>
            <person name="Ehrlich S.D."/>
            <person name="Overbeek R."/>
            <person name="Kyrpides N.C."/>
        </authorList>
    </citation>
    <scope>NUCLEOTIDE SEQUENCE [LARGE SCALE GENOMIC DNA]</scope>
    <source>
        <strain>ATCC 14579 / DSM 31 / CCUG 7414 / JCM 2152 / NBRC 15305 / NCIMB 9373 / NCTC 2599 / NRRL B-3711</strain>
    </source>
</reference>
<feature type="initiator methionine" description="Removed" evidence="1">
    <location>
        <position position="1"/>
    </location>
</feature>
<feature type="chain" id="PRO_0000126359" description="Small ribosomal subunit protein uS8">
    <location>
        <begin position="2"/>
        <end position="132"/>
    </location>
</feature>
<name>RS8_BACCR</name>
<protein>
    <recommendedName>
        <fullName evidence="2">Small ribosomal subunit protein uS8</fullName>
    </recommendedName>
    <alternativeName>
        <fullName evidence="3">30S ribosomal protein S8</fullName>
    </alternativeName>
</protein>
<evidence type="ECO:0000250" key="1"/>
<evidence type="ECO:0000255" key="2">
    <source>
        <dbReference type="HAMAP-Rule" id="MF_01302"/>
    </source>
</evidence>
<evidence type="ECO:0000305" key="3"/>
<gene>
    <name evidence="2" type="primary">rpsH</name>
    <name type="ordered locus">BC_0145</name>
</gene>
<proteinExistence type="inferred from homology"/>
<dbReference type="EMBL" id="AE016877">
    <property type="protein sequence ID" value="AAP07226.1"/>
    <property type="molecule type" value="Genomic_DNA"/>
</dbReference>
<dbReference type="RefSeq" id="NP_830025.1">
    <property type="nucleotide sequence ID" value="NC_004722.1"/>
</dbReference>
<dbReference type="RefSeq" id="WP_000245511.1">
    <property type="nucleotide sequence ID" value="NZ_CP138336.1"/>
</dbReference>
<dbReference type="SMR" id="Q81J28"/>
<dbReference type="STRING" id="226900.BC_0145"/>
<dbReference type="MetOSite" id="Q81J28"/>
<dbReference type="GeneID" id="93010929"/>
<dbReference type="KEGG" id="bce:BC0145"/>
<dbReference type="PATRIC" id="fig|226900.8.peg.146"/>
<dbReference type="HOGENOM" id="CLU_098428_0_2_9"/>
<dbReference type="OrthoDB" id="9802617at2"/>
<dbReference type="PRO" id="PR:Q81J28"/>
<dbReference type="Proteomes" id="UP000001417">
    <property type="component" value="Chromosome"/>
</dbReference>
<dbReference type="GO" id="GO:0022627">
    <property type="term" value="C:cytosolic small ribosomal subunit"/>
    <property type="evidence" value="ECO:0000318"/>
    <property type="project" value="GO_Central"/>
</dbReference>
<dbReference type="GO" id="GO:0019843">
    <property type="term" value="F:rRNA binding"/>
    <property type="evidence" value="ECO:0007669"/>
    <property type="project" value="UniProtKB-UniRule"/>
</dbReference>
<dbReference type="GO" id="GO:0003735">
    <property type="term" value="F:structural constituent of ribosome"/>
    <property type="evidence" value="ECO:0000318"/>
    <property type="project" value="GO_Central"/>
</dbReference>
<dbReference type="GO" id="GO:0006412">
    <property type="term" value="P:translation"/>
    <property type="evidence" value="ECO:0007669"/>
    <property type="project" value="UniProtKB-UniRule"/>
</dbReference>
<dbReference type="FunFam" id="3.30.1370.30:FF:000002">
    <property type="entry name" value="30S ribosomal protein S8"/>
    <property type="match status" value="1"/>
</dbReference>
<dbReference type="FunFam" id="3.30.1490.10:FF:000001">
    <property type="entry name" value="30S ribosomal protein S8"/>
    <property type="match status" value="1"/>
</dbReference>
<dbReference type="Gene3D" id="3.30.1370.30">
    <property type="match status" value="1"/>
</dbReference>
<dbReference type="Gene3D" id="3.30.1490.10">
    <property type="match status" value="1"/>
</dbReference>
<dbReference type="HAMAP" id="MF_01302_B">
    <property type="entry name" value="Ribosomal_uS8_B"/>
    <property type="match status" value="1"/>
</dbReference>
<dbReference type="InterPro" id="IPR000630">
    <property type="entry name" value="Ribosomal_uS8"/>
</dbReference>
<dbReference type="InterPro" id="IPR047863">
    <property type="entry name" value="Ribosomal_uS8_CS"/>
</dbReference>
<dbReference type="InterPro" id="IPR035987">
    <property type="entry name" value="Ribosomal_uS8_sf"/>
</dbReference>
<dbReference type="NCBIfam" id="NF001109">
    <property type="entry name" value="PRK00136.1"/>
    <property type="match status" value="1"/>
</dbReference>
<dbReference type="PANTHER" id="PTHR11758">
    <property type="entry name" value="40S RIBOSOMAL PROTEIN S15A"/>
    <property type="match status" value="1"/>
</dbReference>
<dbReference type="Pfam" id="PF00410">
    <property type="entry name" value="Ribosomal_S8"/>
    <property type="match status" value="1"/>
</dbReference>
<dbReference type="SUPFAM" id="SSF56047">
    <property type="entry name" value="Ribosomal protein S8"/>
    <property type="match status" value="1"/>
</dbReference>
<dbReference type="PROSITE" id="PS00053">
    <property type="entry name" value="RIBOSOMAL_S8"/>
    <property type="match status" value="1"/>
</dbReference>
<accession>Q81J28</accession>